<proteinExistence type="inferred from homology"/>
<reference key="1">
    <citation type="submission" date="2008-10" db="EMBL/GenBank/DDBJ databases">
        <title>Genome sequence of Bacillus cereus AH187.</title>
        <authorList>
            <person name="Dodson R.J."/>
            <person name="Durkin A.S."/>
            <person name="Rosovitz M.J."/>
            <person name="Rasko D.A."/>
            <person name="Kolsto A.B."/>
            <person name="Okstad O.A."/>
            <person name="Ravel J."/>
            <person name="Sutton G."/>
        </authorList>
    </citation>
    <scope>NUCLEOTIDE SEQUENCE [LARGE SCALE GENOMIC DNA]</scope>
    <source>
        <strain>AH187</strain>
    </source>
</reference>
<feature type="chain" id="PRO_1000143883" description="Small ribosomal subunit protein uS14">
    <location>
        <begin position="1"/>
        <end position="61"/>
    </location>
</feature>
<feature type="binding site" evidence="1">
    <location>
        <position position="24"/>
    </location>
    <ligand>
        <name>Zn(2+)</name>
        <dbReference type="ChEBI" id="CHEBI:29105"/>
    </ligand>
</feature>
<feature type="binding site" evidence="1">
    <location>
        <position position="27"/>
    </location>
    <ligand>
        <name>Zn(2+)</name>
        <dbReference type="ChEBI" id="CHEBI:29105"/>
    </ligand>
</feature>
<feature type="binding site" evidence="1">
    <location>
        <position position="40"/>
    </location>
    <ligand>
        <name>Zn(2+)</name>
        <dbReference type="ChEBI" id="CHEBI:29105"/>
    </ligand>
</feature>
<feature type="binding site" evidence="1">
    <location>
        <position position="43"/>
    </location>
    <ligand>
        <name>Zn(2+)</name>
        <dbReference type="ChEBI" id="CHEBI:29105"/>
    </ligand>
</feature>
<protein>
    <recommendedName>
        <fullName evidence="1">Small ribosomal subunit protein uS14</fullName>
    </recommendedName>
    <alternativeName>
        <fullName evidence="2">30S ribosomal protein S14 type Z</fullName>
    </alternativeName>
</protein>
<dbReference type="EMBL" id="CP001177">
    <property type="protein sequence ID" value="ACJ81601.1"/>
    <property type="molecule type" value="Genomic_DNA"/>
</dbReference>
<dbReference type="SMR" id="B7HQV7"/>
<dbReference type="KEGG" id="bcr:BCAH187_A0154"/>
<dbReference type="HOGENOM" id="CLU_139869_3_0_9"/>
<dbReference type="Proteomes" id="UP000002214">
    <property type="component" value="Chromosome"/>
</dbReference>
<dbReference type="GO" id="GO:0015935">
    <property type="term" value="C:small ribosomal subunit"/>
    <property type="evidence" value="ECO:0007669"/>
    <property type="project" value="TreeGrafter"/>
</dbReference>
<dbReference type="GO" id="GO:0019843">
    <property type="term" value="F:rRNA binding"/>
    <property type="evidence" value="ECO:0007669"/>
    <property type="project" value="UniProtKB-UniRule"/>
</dbReference>
<dbReference type="GO" id="GO:0003735">
    <property type="term" value="F:structural constituent of ribosome"/>
    <property type="evidence" value="ECO:0007669"/>
    <property type="project" value="InterPro"/>
</dbReference>
<dbReference type="GO" id="GO:0008270">
    <property type="term" value="F:zinc ion binding"/>
    <property type="evidence" value="ECO:0007669"/>
    <property type="project" value="UniProtKB-UniRule"/>
</dbReference>
<dbReference type="GO" id="GO:0006412">
    <property type="term" value="P:translation"/>
    <property type="evidence" value="ECO:0007669"/>
    <property type="project" value="UniProtKB-UniRule"/>
</dbReference>
<dbReference type="FunFam" id="4.10.830.10:FF:000001">
    <property type="entry name" value="30S ribosomal protein S14 type Z"/>
    <property type="match status" value="1"/>
</dbReference>
<dbReference type="Gene3D" id="4.10.830.10">
    <property type="entry name" value="30s Ribosomal Protein S14, Chain N"/>
    <property type="match status" value="1"/>
</dbReference>
<dbReference type="HAMAP" id="MF_01364_B">
    <property type="entry name" value="Ribosomal_uS14_2_B"/>
    <property type="match status" value="1"/>
</dbReference>
<dbReference type="InterPro" id="IPR001209">
    <property type="entry name" value="Ribosomal_uS14"/>
</dbReference>
<dbReference type="InterPro" id="IPR023053">
    <property type="entry name" value="Ribosomal_uS14_bact"/>
</dbReference>
<dbReference type="InterPro" id="IPR018271">
    <property type="entry name" value="Ribosomal_uS14_CS"/>
</dbReference>
<dbReference type="InterPro" id="IPR043140">
    <property type="entry name" value="Ribosomal_uS14_sf"/>
</dbReference>
<dbReference type="NCBIfam" id="NF005974">
    <property type="entry name" value="PRK08061.1"/>
    <property type="match status" value="1"/>
</dbReference>
<dbReference type="PANTHER" id="PTHR19836">
    <property type="entry name" value="30S RIBOSOMAL PROTEIN S14"/>
    <property type="match status" value="1"/>
</dbReference>
<dbReference type="PANTHER" id="PTHR19836:SF26">
    <property type="entry name" value="SMALL RIBOSOMAL SUBUNIT PROTEIN US14B"/>
    <property type="match status" value="1"/>
</dbReference>
<dbReference type="Pfam" id="PF00253">
    <property type="entry name" value="Ribosomal_S14"/>
    <property type="match status" value="1"/>
</dbReference>
<dbReference type="SUPFAM" id="SSF57716">
    <property type="entry name" value="Glucocorticoid receptor-like (DNA-binding domain)"/>
    <property type="match status" value="1"/>
</dbReference>
<dbReference type="PROSITE" id="PS00527">
    <property type="entry name" value="RIBOSOMAL_S14"/>
    <property type="match status" value="1"/>
</dbReference>
<organism>
    <name type="scientific">Bacillus cereus (strain AH187)</name>
    <dbReference type="NCBI Taxonomy" id="405534"/>
    <lineage>
        <taxon>Bacteria</taxon>
        <taxon>Bacillati</taxon>
        <taxon>Bacillota</taxon>
        <taxon>Bacilli</taxon>
        <taxon>Bacillales</taxon>
        <taxon>Bacillaceae</taxon>
        <taxon>Bacillus</taxon>
        <taxon>Bacillus cereus group</taxon>
    </lineage>
</organism>
<sequence>MAKKSMIAKQKRTPKFKVQEYTRCERCGRPHSVYRKFKLCRICFRELAYKGQIPGVKKASW</sequence>
<accession>B7HQV7</accession>
<name>RS14Z_BACC7</name>
<gene>
    <name evidence="1" type="primary">rpsZ</name>
    <name evidence="1" type="synonym">rpsN</name>
    <name type="ordered locus">BCAH187_A0154</name>
</gene>
<comment type="function">
    <text evidence="1">Binds 16S rRNA, required for the assembly of 30S particles and may also be responsible for determining the conformation of the 16S rRNA at the A site.</text>
</comment>
<comment type="cofactor">
    <cofactor evidence="1">
        <name>Zn(2+)</name>
        <dbReference type="ChEBI" id="CHEBI:29105"/>
    </cofactor>
    <text evidence="1">Binds 1 zinc ion per subunit.</text>
</comment>
<comment type="subunit">
    <text evidence="1">Part of the 30S ribosomal subunit. Contacts proteins S3 and S10.</text>
</comment>
<comment type="similarity">
    <text evidence="1">Belongs to the universal ribosomal protein uS14 family. Zinc-binding uS14 subfamily.</text>
</comment>
<keyword id="KW-0479">Metal-binding</keyword>
<keyword id="KW-0687">Ribonucleoprotein</keyword>
<keyword id="KW-0689">Ribosomal protein</keyword>
<keyword id="KW-0694">RNA-binding</keyword>
<keyword id="KW-0699">rRNA-binding</keyword>
<keyword id="KW-0862">Zinc</keyword>
<evidence type="ECO:0000255" key="1">
    <source>
        <dbReference type="HAMAP-Rule" id="MF_01364"/>
    </source>
</evidence>
<evidence type="ECO:0000305" key="2"/>